<sequence>MLDEKSSNTTSVVVLCTAPDEATAQDLAAKVLAEKLAACATLIPGATSLYYWEGKLEQEYEVQMILKTTVSHQQALLECLKSHHPYQTPELLVLPVTHGDTDYLSWLNASLR</sequence>
<name>CUTA_ECOL5</name>
<organism>
    <name type="scientific">Escherichia coli O6:K15:H31 (strain 536 / UPEC)</name>
    <dbReference type="NCBI Taxonomy" id="362663"/>
    <lineage>
        <taxon>Bacteria</taxon>
        <taxon>Pseudomonadati</taxon>
        <taxon>Pseudomonadota</taxon>
        <taxon>Gammaproteobacteria</taxon>
        <taxon>Enterobacterales</taxon>
        <taxon>Enterobacteriaceae</taxon>
        <taxon>Escherichia</taxon>
    </lineage>
</organism>
<evidence type="ECO:0000255" key="1">
    <source>
        <dbReference type="HAMAP-Rule" id="MF_01160"/>
    </source>
</evidence>
<proteinExistence type="inferred from homology"/>
<gene>
    <name evidence="1" type="primary">cutA</name>
    <name type="ordered locus">ECP_4381</name>
</gene>
<keyword id="KW-0186">Copper</keyword>
<keyword id="KW-0963">Cytoplasm</keyword>
<keyword id="KW-0479">Metal-binding</keyword>
<accession>Q0T9Q4</accession>
<dbReference type="EMBL" id="CP000247">
    <property type="protein sequence ID" value="ABG72325.1"/>
    <property type="molecule type" value="Genomic_DNA"/>
</dbReference>
<dbReference type="RefSeq" id="WP_000883409.1">
    <property type="nucleotide sequence ID" value="NC_008253.1"/>
</dbReference>
<dbReference type="SMR" id="Q0T9Q4"/>
<dbReference type="KEGG" id="ecp:ECP_4381"/>
<dbReference type="HOGENOM" id="CLU_098807_3_0_6"/>
<dbReference type="Proteomes" id="UP000009182">
    <property type="component" value="Chromosome"/>
</dbReference>
<dbReference type="GO" id="GO:0005737">
    <property type="term" value="C:cytoplasm"/>
    <property type="evidence" value="ECO:0007669"/>
    <property type="project" value="UniProtKB-SubCell"/>
</dbReference>
<dbReference type="GO" id="GO:0005507">
    <property type="term" value="F:copper ion binding"/>
    <property type="evidence" value="ECO:0007669"/>
    <property type="project" value="UniProtKB-UniRule"/>
</dbReference>
<dbReference type="GO" id="GO:0010038">
    <property type="term" value="P:response to metal ion"/>
    <property type="evidence" value="ECO:0007669"/>
    <property type="project" value="InterPro"/>
</dbReference>
<dbReference type="FunFam" id="3.30.70.120:FF:000004">
    <property type="entry name" value="Divalent-cation tolerance protein CutA"/>
    <property type="match status" value="1"/>
</dbReference>
<dbReference type="Gene3D" id="3.30.70.120">
    <property type="match status" value="1"/>
</dbReference>
<dbReference type="HAMAP" id="MF_01160">
    <property type="entry name" value="CutA"/>
    <property type="match status" value="1"/>
</dbReference>
<dbReference type="InterPro" id="IPR023700">
    <property type="entry name" value="CutA_Enterobact"/>
</dbReference>
<dbReference type="InterPro" id="IPR004323">
    <property type="entry name" value="Ion_tolerance_CutA"/>
</dbReference>
<dbReference type="InterPro" id="IPR011322">
    <property type="entry name" value="N-reg_PII-like_a/b"/>
</dbReference>
<dbReference type="InterPro" id="IPR015867">
    <property type="entry name" value="N-reg_PII/ATP_PRibTrfase_C"/>
</dbReference>
<dbReference type="NCBIfam" id="NF007930">
    <property type="entry name" value="PRK10645.1"/>
    <property type="match status" value="1"/>
</dbReference>
<dbReference type="PANTHER" id="PTHR23419">
    <property type="entry name" value="DIVALENT CATION TOLERANCE CUTA-RELATED"/>
    <property type="match status" value="1"/>
</dbReference>
<dbReference type="PANTHER" id="PTHR23419:SF8">
    <property type="entry name" value="FI09726P"/>
    <property type="match status" value="1"/>
</dbReference>
<dbReference type="Pfam" id="PF03091">
    <property type="entry name" value="CutA1"/>
    <property type="match status" value="1"/>
</dbReference>
<dbReference type="SUPFAM" id="SSF54913">
    <property type="entry name" value="GlnB-like"/>
    <property type="match status" value="1"/>
</dbReference>
<comment type="function">
    <text evidence="1">Involved in resistance toward heavy metals.</text>
</comment>
<comment type="cofactor">
    <cofactor evidence="1">
        <name>Cu cation</name>
        <dbReference type="ChEBI" id="CHEBI:23378"/>
    </cofactor>
    <text evidence="1">Binds 1 copper ion per subunit.</text>
</comment>
<comment type="subunit">
    <text evidence="1">Homotrimer.</text>
</comment>
<comment type="subcellular location">
    <subcellularLocation>
        <location evidence="1">Cytoplasm</location>
    </subcellularLocation>
</comment>
<comment type="similarity">
    <text evidence="1">Belongs to the CutA family.</text>
</comment>
<reference key="1">
    <citation type="journal article" date="2006" name="Mol. Microbiol.">
        <title>Role of pathogenicity island-associated integrases in the genome plasticity of uropathogenic Escherichia coli strain 536.</title>
        <authorList>
            <person name="Hochhut B."/>
            <person name="Wilde C."/>
            <person name="Balling G."/>
            <person name="Middendorf B."/>
            <person name="Dobrindt U."/>
            <person name="Brzuszkiewicz E."/>
            <person name="Gottschalk G."/>
            <person name="Carniel E."/>
            <person name="Hacker J."/>
        </authorList>
    </citation>
    <scope>NUCLEOTIDE SEQUENCE [LARGE SCALE GENOMIC DNA]</scope>
    <source>
        <strain>536 / UPEC</strain>
    </source>
</reference>
<protein>
    <recommendedName>
        <fullName evidence="1">Divalent-cation tolerance protein CutA</fullName>
    </recommendedName>
</protein>
<feature type="chain" id="PRO_0000280484" description="Divalent-cation tolerance protein CutA">
    <location>
        <begin position="1"/>
        <end position="112"/>
    </location>
</feature>
<feature type="binding site" evidence="1">
    <location>
        <position position="16"/>
    </location>
    <ligand>
        <name>Cu cation</name>
        <dbReference type="ChEBI" id="CHEBI:23378"/>
    </ligand>
</feature>
<feature type="binding site" evidence="1">
    <location>
        <position position="83"/>
    </location>
    <ligand>
        <name>Cu cation</name>
        <dbReference type="ChEBI" id="CHEBI:23378"/>
    </ligand>
</feature>
<feature type="binding site" evidence="1">
    <location>
        <position position="84"/>
    </location>
    <ligand>
        <name>Cu cation</name>
        <dbReference type="ChEBI" id="CHEBI:23378"/>
    </ligand>
</feature>